<gene>
    <name type="primary">cheZ</name>
    <name type="ordered locus">ECBD_1757</name>
    <name type="ordered locus">ECD_01852</name>
    <name type="ordered locus">B21_01841</name>
</gene>
<organism>
    <name type="scientific">Escherichia coli (strain B / BL21-DE3)</name>
    <dbReference type="NCBI Taxonomy" id="469008"/>
    <lineage>
        <taxon>Bacteria</taxon>
        <taxon>Pseudomonadati</taxon>
        <taxon>Pseudomonadota</taxon>
        <taxon>Gammaproteobacteria</taxon>
        <taxon>Enterobacterales</taxon>
        <taxon>Enterobacteriaceae</taxon>
        <taxon>Escherichia</taxon>
    </lineage>
</organism>
<name>CHEZ_ECOBD</name>
<keyword id="KW-0145">Chemotaxis</keyword>
<keyword id="KW-0963">Cytoplasm</keyword>
<keyword id="KW-0283">Flagellar rotation</keyword>
<keyword id="KW-0378">Hydrolase</keyword>
<keyword id="KW-0904">Protein phosphatase</keyword>
<keyword id="KW-0346">Stress response</keyword>
<comment type="function">
    <text evidence="1">Plays an important role in bacterial chemotaxis signal transduction pathway by accelerating the dephosphorylation of phosphorylated CheY (CheY-P).</text>
</comment>
<comment type="subunit">
    <text evidence="1">Homodimer.</text>
</comment>
<comment type="subcellular location">
    <subcellularLocation>
        <location evidence="1">Cytoplasm</location>
    </subcellularLocation>
</comment>
<comment type="induction">
    <text evidence="3">Induced by heat shock and guanidine hydrochloride-derived protein denaturation stress.</text>
</comment>
<comment type="similarity">
    <text evidence="4">Belongs to the CheZ family.</text>
</comment>
<proteinExistence type="evidence at transcript level"/>
<evidence type="ECO:0000250" key="1"/>
<evidence type="ECO:0000256" key="2">
    <source>
        <dbReference type="SAM" id="MobiDB-lite"/>
    </source>
</evidence>
<evidence type="ECO:0000269" key="3">
    <source>
    </source>
</evidence>
<evidence type="ECO:0000305" key="4"/>
<accession>C6EBU6</accession>
<accession>C5W5C5</accession>
<feature type="chain" id="PRO_0000410775" description="Protein phosphatase CheZ">
    <location>
        <begin position="1"/>
        <end position="214"/>
    </location>
</feature>
<feature type="region of interest" description="Disordered" evidence="2">
    <location>
        <begin position="174"/>
        <end position="199"/>
    </location>
</feature>
<feature type="compositionally biased region" description="Polar residues" evidence="2">
    <location>
        <begin position="183"/>
        <end position="193"/>
    </location>
</feature>
<feature type="site" description="Enhances dephosphorylation of CheY-P" evidence="1">
    <location>
        <position position="147"/>
    </location>
</feature>
<protein>
    <recommendedName>
        <fullName>Protein phosphatase CheZ</fullName>
        <ecNumber>3.1.3.-</ecNumber>
    </recommendedName>
    <alternativeName>
        <fullName>Chemotaxis protein CheZ</fullName>
    </alternativeName>
</protein>
<reference key="1">
    <citation type="submission" date="2009-06" db="EMBL/GenBank/DDBJ databases">
        <title>Sequencing and gene expression analysis of Escherichia coli BL21.</title>
        <authorList>
            <person name="Leparc G."/>
            <person name="Striedner G."/>
            <person name="Bayer K."/>
            <person name="Kreil D."/>
            <person name="Krempl P.M."/>
        </authorList>
    </citation>
    <scope>NUCLEOTIDE SEQUENCE [LARGE SCALE GENOMIC DNA]</scope>
    <source>
        <strain>B / BL21-DE3</strain>
    </source>
</reference>
<reference key="2">
    <citation type="submission" date="2009-07" db="EMBL/GenBank/DDBJ databases">
        <title>Complete sequence of Escherichia coli BL21(DE3).</title>
        <authorList>
            <person name="Lucas S."/>
            <person name="Copeland A."/>
            <person name="Lapidus A."/>
            <person name="Glavina del Rio T."/>
            <person name="Dalin E."/>
            <person name="Tice H."/>
            <person name="Bruce D."/>
            <person name="Goodwin L."/>
            <person name="Pitluck S."/>
            <person name="LaButti K.M."/>
            <person name="Clum A."/>
            <person name="Larimer F."/>
            <person name="Land M."/>
            <person name="Hauser L."/>
            <person name="Kyrpides N."/>
            <person name="Anderson I."/>
            <person name="Sorek R."/>
            <person name="Rubin E."/>
        </authorList>
    </citation>
    <scope>NUCLEOTIDE SEQUENCE [LARGE SCALE GENOMIC DNA]</scope>
    <source>
        <strain>B / BL21-DE3</strain>
    </source>
</reference>
<reference key="3">
    <citation type="journal article" date="2009" name="J. Mol. Biol.">
        <title>Genome sequences of Escherichia coli B strains REL606 and BL21(DE3).</title>
        <authorList>
            <person name="Jeong H."/>
            <person name="Barbe V."/>
            <person name="Lee C.H."/>
            <person name="Vallenet D."/>
            <person name="Yu D.S."/>
            <person name="Choi S.H."/>
            <person name="Couloux A."/>
            <person name="Lee S.W."/>
            <person name="Yoon S.H."/>
            <person name="Cattolico L."/>
            <person name="Hur C.G."/>
            <person name="Park H.S."/>
            <person name="Segurens B."/>
            <person name="Kim S.C."/>
            <person name="Oh T.K."/>
            <person name="Lenski R.E."/>
            <person name="Studier F.W."/>
            <person name="Daegelen P."/>
            <person name="Kim J.F."/>
        </authorList>
    </citation>
    <scope>NUCLEOTIDE SEQUENCE [LARGE SCALE GENOMIC DNA]</scope>
    <source>
        <strain>B / BL21-DE3</strain>
    </source>
</reference>
<reference key="4">
    <citation type="journal article" date="2008" name="J. Proteome Res.">
        <title>Multiple stressor-induced proteome responses of Escherichia coli BL21(DE3).</title>
        <authorList>
            <person name="Han K.Y."/>
            <person name="Park J.S."/>
            <person name="Seo H.S."/>
            <person name="Ahn K.Y."/>
            <person name="Lee J."/>
        </authorList>
    </citation>
    <scope>INDUCTION BY STRESS</scope>
    <source>
        <strain>B / BL21-DE3</strain>
    </source>
</reference>
<dbReference type="EC" id="3.1.3.-"/>
<dbReference type="EMBL" id="AM946981">
    <property type="protein sequence ID" value="CAQ32358.1"/>
    <property type="molecule type" value="Genomic_DNA"/>
</dbReference>
<dbReference type="EMBL" id="CP001665">
    <property type="protein sequence ID" value="ACT28808.1"/>
    <property type="molecule type" value="Genomic_DNA"/>
</dbReference>
<dbReference type="EMBL" id="CP001509">
    <property type="protein sequence ID" value="ACT43706.1"/>
    <property type="molecule type" value="Genomic_DNA"/>
</dbReference>
<dbReference type="RefSeq" id="WP_000983609.1">
    <property type="nucleotide sequence ID" value="NZ_JADXDS010000013.1"/>
</dbReference>
<dbReference type="SMR" id="C6EBU6"/>
<dbReference type="GeneID" id="75171954"/>
<dbReference type="KEGG" id="ebd:ECBD_1757"/>
<dbReference type="KEGG" id="ebe:B21_01841"/>
<dbReference type="KEGG" id="ebl:ECD_01852"/>
<dbReference type="PATRIC" id="fig|469008.15.peg.1880"/>
<dbReference type="eggNOG" id="COG3143">
    <property type="taxonomic scope" value="Bacteria"/>
</dbReference>
<dbReference type="HOGENOM" id="CLU_080718_1_0_6"/>
<dbReference type="GO" id="GO:0009288">
    <property type="term" value="C:bacterial-type flagellum"/>
    <property type="evidence" value="ECO:0007669"/>
    <property type="project" value="InterPro"/>
</dbReference>
<dbReference type="GO" id="GO:0005737">
    <property type="term" value="C:cytoplasm"/>
    <property type="evidence" value="ECO:0007669"/>
    <property type="project" value="UniProtKB-SubCell"/>
</dbReference>
<dbReference type="GO" id="GO:0004721">
    <property type="term" value="F:phosphoprotein phosphatase activity"/>
    <property type="evidence" value="ECO:0007669"/>
    <property type="project" value="UniProtKB-KW"/>
</dbReference>
<dbReference type="GO" id="GO:0097588">
    <property type="term" value="P:archaeal or bacterial-type flagellum-dependent cell motility"/>
    <property type="evidence" value="ECO:0007669"/>
    <property type="project" value="UniProtKB-KW"/>
</dbReference>
<dbReference type="GO" id="GO:0006935">
    <property type="term" value="P:chemotaxis"/>
    <property type="evidence" value="ECO:0007669"/>
    <property type="project" value="UniProtKB-KW"/>
</dbReference>
<dbReference type="GO" id="GO:0050920">
    <property type="term" value="P:regulation of chemotaxis"/>
    <property type="evidence" value="ECO:0007669"/>
    <property type="project" value="InterPro"/>
</dbReference>
<dbReference type="FunFam" id="1.10.287.500:FF:000001">
    <property type="entry name" value="Protein phosphatase CheZ"/>
    <property type="match status" value="1"/>
</dbReference>
<dbReference type="Gene3D" id="1.10.287.500">
    <property type="entry name" value="Helix hairpin bin"/>
    <property type="match status" value="1"/>
</dbReference>
<dbReference type="Gene3D" id="1.20.5.590">
    <property type="entry name" value="Single helix bin"/>
    <property type="match status" value="1"/>
</dbReference>
<dbReference type="InterPro" id="IPR007439">
    <property type="entry name" value="Chemotax_Pase_CheZ"/>
</dbReference>
<dbReference type="InterPro" id="IPR050992">
    <property type="entry name" value="CheZ_family_phosphatases"/>
</dbReference>
<dbReference type="NCBIfam" id="NF008368">
    <property type="entry name" value="PRK11166.1"/>
    <property type="match status" value="1"/>
</dbReference>
<dbReference type="PANTHER" id="PTHR43693">
    <property type="entry name" value="PROTEIN PHOSPHATASE CHEZ"/>
    <property type="match status" value="1"/>
</dbReference>
<dbReference type="PANTHER" id="PTHR43693:SF1">
    <property type="entry name" value="PROTEIN PHOSPHATASE CHEZ"/>
    <property type="match status" value="1"/>
</dbReference>
<dbReference type="Pfam" id="PF04344">
    <property type="entry name" value="CheZ"/>
    <property type="match status" value="1"/>
</dbReference>
<dbReference type="PIRSF" id="PIRSF002884">
    <property type="entry name" value="CheZ"/>
    <property type="match status" value="1"/>
</dbReference>
<dbReference type="SUPFAM" id="SSF75708">
    <property type="entry name" value="Chemotaxis phosphatase CheZ"/>
    <property type="match status" value="1"/>
</dbReference>
<sequence>MMQPSIKPADEHSAGDIIARIGSLTRMLRDSLRELGLDQAIAEAAEAIPDARDRLYYVVQMTAQAAERALNSVEASQPHQDQMEKSAKALTQRWDDWFADPIDLADARELVTDTRQFLADVPAHTSFTNAQLLEIMMAQDFQDLTGQVIKRMMDVIQEIERQLLMVLLENIPEQESRPKRENQSLLNGPQVDTSKAGVVASQDQVDDLLDSLGF</sequence>